<reference key="1">
    <citation type="journal article" date="1979" name="Nature">
        <title>Cytochrome c2 sequence variation among the recognised species of purple nonsulphur photosynthetic bacteria.</title>
        <authorList>
            <person name="Ambler R.P."/>
            <person name="Daniel M."/>
            <person name="Hermoso J."/>
            <person name="Meyer T.E."/>
            <person name="Bartsch R.G."/>
            <person name="Kamen M.D."/>
        </authorList>
    </citation>
    <scope>PROTEIN SEQUENCE</scope>
    <source>
        <strain>ATCC 17001 / ATH 2.1.6 / BCRC 16408</strain>
    </source>
</reference>
<reference key="2">
    <citation type="submission" date="1974-12" db="PIR data bank">
        <authorList>
            <person name="Ambler R.P."/>
            <person name="Meyer T.E."/>
            <person name="Murray S."/>
        </authorList>
    </citation>
    <scope>PROTEIN SEQUENCE</scope>
    <scope>PYROGLUTAMATE FORMATION AT GLN-1</scope>
    <source>
        <strain>ATCC 17001 / ATH 2.1.6 / BCRC 16408</strain>
    </source>
</reference>
<evidence type="ECO:0000269" key="1">
    <source ref="2"/>
</evidence>
<evidence type="ECO:0000305" key="2"/>
<protein>
    <recommendedName>
        <fullName>Cytochrome c2</fullName>
    </recommendedName>
</protein>
<gene>
    <name type="primary">cycA</name>
</gene>
<dbReference type="PIR" id="B00086">
    <property type="entry name" value="CCRF2P"/>
</dbReference>
<dbReference type="SMR" id="P00090"/>
<dbReference type="GO" id="GO:0009055">
    <property type="term" value="F:electron transfer activity"/>
    <property type="evidence" value="ECO:0007669"/>
    <property type="project" value="InterPro"/>
</dbReference>
<dbReference type="GO" id="GO:0020037">
    <property type="term" value="F:heme binding"/>
    <property type="evidence" value="ECO:0007669"/>
    <property type="project" value="InterPro"/>
</dbReference>
<dbReference type="GO" id="GO:0046872">
    <property type="term" value="F:metal ion binding"/>
    <property type="evidence" value="ECO:0007669"/>
    <property type="project" value="UniProtKB-KW"/>
</dbReference>
<dbReference type="GO" id="GO:0015979">
    <property type="term" value="P:photosynthesis"/>
    <property type="evidence" value="ECO:0007669"/>
    <property type="project" value="UniProtKB-KW"/>
</dbReference>
<dbReference type="Gene3D" id="1.10.760.10">
    <property type="entry name" value="Cytochrome c-like domain"/>
    <property type="match status" value="1"/>
</dbReference>
<dbReference type="InterPro" id="IPR009056">
    <property type="entry name" value="Cyt_c-like_dom"/>
</dbReference>
<dbReference type="InterPro" id="IPR036909">
    <property type="entry name" value="Cyt_c-like_dom_sf"/>
</dbReference>
<dbReference type="InterPro" id="IPR002327">
    <property type="entry name" value="Cyt_c_1A/1B"/>
</dbReference>
<dbReference type="PANTHER" id="PTHR11961">
    <property type="entry name" value="CYTOCHROME C"/>
    <property type="match status" value="1"/>
</dbReference>
<dbReference type="Pfam" id="PF00034">
    <property type="entry name" value="Cytochrom_C"/>
    <property type="match status" value="1"/>
</dbReference>
<dbReference type="PRINTS" id="PR00604">
    <property type="entry name" value="CYTCHRMECIAB"/>
</dbReference>
<dbReference type="SUPFAM" id="SSF46626">
    <property type="entry name" value="Cytochrome c"/>
    <property type="match status" value="1"/>
</dbReference>
<dbReference type="PROSITE" id="PS51007">
    <property type="entry name" value="CYTC"/>
    <property type="match status" value="1"/>
</dbReference>
<comment type="function">
    <text>Cytochrome c2 is found mainly in purple, non-sulfur, photosynthetic bacteria where it functions as the electron donor to the oxidized bacteriochlorophyll in the photophosphorylation pathway. However, it may also have a role in the respiratory chain and is found in some non-photosynthetic bacteria.</text>
</comment>
<comment type="PTM">
    <text>Binds 1 heme c group covalently per subunit.</text>
</comment>
<comment type="similarity">
    <text evidence="2">Belongs to the cytochrome c family.</text>
</comment>
<accession>P00090</accession>
<keyword id="KW-0903">Direct protein sequencing</keyword>
<keyword id="KW-0249">Electron transport</keyword>
<keyword id="KW-0349">Heme</keyword>
<keyword id="KW-0408">Iron</keyword>
<keyword id="KW-0479">Metal-binding</keyword>
<keyword id="KW-0602">Photosynthesis</keyword>
<keyword id="KW-0873">Pyrrolidone carboxylic acid</keyword>
<keyword id="KW-0813">Transport</keyword>
<feature type="chain" id="PRO_0000380714" description="Cytochrome c2">
    <location>
        <begin position="1"/>
        <end position="114"/>
    </location>
</feature>
<feature type="binding site" description="covalent">
    <location>
        <position position="13"/>
    </location>
    <ligand>
        <name>heme c</name>
        <dbReference type="ChEBI" id="CHEBI:61717"/>
    </ligand>
</feature>
<feature type="binding site" description="covalent">
    <location>
        <position position="16"/>
    </location>
    <ligand>
        <name>heme c</name>
        <dbReference type="ChEBI" id="CHEBI:61717"/>
    </ligand>
</feature>
<feature type="binding site" description="axial binding residue">
    <location>
        <position position="17"/>
    </location>
    <ligand>
        <name>heme c</name>
        <dbReference type="ChEBI" id="CHEBI:61717"/>
    </ligand>
    <ligandPart>
        <name>Fe</name>
        <dbReference type="ChEBI" id="CHEBI:18248"/>
    </ligandPart>
</feature>
<feature type="binding site" description="axial binding residue">
    <location>
        <position position="93"/>
    </location>
    <ligand>
        <name>heme c</name>
        <dbReference type="ChEBI" id="CHEBI:61717"/>
    </ligand>
    <ligandPart>
        <name>Fe</name>
        <dbReference type="ChEBI" id="CHEBI:18248"/>
    </ligandPart>
</feature>
<feature type="modified residue" description="Pyrrolidone carboxylic acid" evidence="1">
    <location>
        <position position="1"/>
    </location>
</feature>
<organism>
    <name type="scientific">Rhodopseudomonas palustris</name>
    <dbReference type="NCBI Taxonomy" id="1076"/>
    <lineage>
        <taxon>Bacteria</taxon>
        <taxon>Pseudomonadati</taxon>
        <taxon>Pseudomonadota</taxon>
        <taxon>Alphaproteobacteria</taxon>
        <taxon>Hyphomicrobiales</taxon>
        <taxon>Nitrobacteraceae</taxon>
        <taxon>Rhodopseudomonas</taxon>
    </lineage>
</organism>
<proteinExistence type="evidence at protein level"/>
<sequence>QDAAKGEAVFKQCMTCHRADKNMVGPALGGVVGRKAGTAAGFTYSPLNHNSGEAGLVWTQENIIAYLPDPNAYLKKFLTDKGQADKATGSTKMTFKLANDQQRKDVAAYLATLK</sequence>
<name>CYC21_RHOPL</name>